<sequence length="313" mass="35423">MTQPIVVAALYKFVTLEDYVALREPLLQAMVDNGIKGTLLIAEEGINGTVSGSREGIDGLMAWLKTDPRMVDIDHKESYCDDQPFYRTKVKLKKEIVTLGVEGVDPNKKVGTYVEPQDWNALISDPEVLLIDTRNDYEVSIGTFEGAIDPKTTSFREFPDYIKANFDPAKHKKVAMFCTGGIRCEKASSYMLSEGFDEVYHLKGGILKYLEEVPQEETKWQGDCFVFDNRVTVRHDLSEGDYDQCHACRTPVSVEDRASEHYVAGISCPHCWDKLPEKTRRSAIDRQKQIELAKARNMPHPIGFNYKQTPSEA</sequence>
<keyword id="KW-0560">Oxidoreductase</keyword>
<keyword id="KW-0819">tRNA processing</keyword>
<name>TRHO_PSEFS</name>
<feature type="chain" id="PRO_1000206339" description="tRNA uridine(34) hydroxylase">
    <location>
        <begin position="1"/>
        <end position="313"/>
    </location>
</feature>
<feature type="domain" description="Rhodanese" evidence="1">
    <location>
        <begin position="124"/>
        <end position="218"/>
    </location>
</feature>
<feature type="active site" description="Cysteine persulfide intermediate" evidence="1">
    <location>
        <position position="178"/>
    </location>
</feature>
<protein>
    <recommendedName>
        <fullName evidence="1">tRNA uridine(34) hydroxylase</fullName>
        <ecNumber evidence="1">1.14.-.-</ecNumber>
    </recommendedName>
    <alternativeName>
        <fullName evidence="1">tRNA hydroxylation protein O</fullName>
    </alternativeName>
</protein>
<accession>C3K059</accession>
<organism>
    <name type="scientific">Pseudomonas fluorescens (strain SBW25)</name>
    <dbReference type="NCBI Taxonomy" id="216595"/>
    <lineage>
        <taxon>Bacteria</taxon>
        <taxon>Pseudomonadati</taxon>
        <taxon>Pseudomonadota</taxon>
        <taxon>Gammaproteobacteria</taxon>
        <taxon>Pseudomonadales</taxon>
        <taxon>Pseudomonadaceae</taxon>
        <taxon>Pseudomonas</taxon>
    </lineage>
</organism>
<dbReference type="EC" id="1.14.-.-" evidence="1"/>
<dbReference type="EMBL" id="AM181176">
    <property type="protein sequence ID" value="CAY50902.1"/>
    <property type="molecule type" value="Genomic_DNA"/>
</dbReference>
<dbReference type="RefSeq" id="WP_015885081.1">
    <property type="nucleotide sequence ID" value="NC_012660.1"/>
</dbReference>
<dbReference type="SMR" id="C3K059"/>
<dbReference type="STRING" id="294.SRM1_04036"/>
<dbReference type="PATRIC" id="fig|216595.4.peg.4454"/>
<dbReference type="eggNOG" id="COG1054">
    <property type="taxonomic scope" value="Bacteria"/>
</dbReference>
<dbReference type="HOGENOM" id="CLU_038878_0_0_6"/>
<dbReference type="OrthoDB" id="9778326at2"/>
<dbReference type="GO" id="GO:0016705">
    <property type="term" value="F:oxidoreductase activity, acting on paired donors, with incorporation or reduction of molecular oxygen"/>
    <property type="evidence" value="ECO:0007669"/>
    <property type="project" value="UniProtKB-UniRule"/>
</dbReference>
<dbReference type="GO" id="GO:0006400">
    <property type="term" value="P:tRNA modification"/>
    <property type="evidence" value="ECO:0007669"/>
    <property type="project" value="UniProtKB-UniRule"/>
</dbReference>
<dbReference type="CDD" id="cd01518">
    <property type="entry name" value="RHOD_YceA"/>
    <property type="match status" value="1"/>
</dbReference>
<dbReference type="Gene3D" id="3.30.70.100">
    <property type="match status" value="1"/>
</dbReference>
<dbReference type="Gene3D" id="3.40.250.10">
    <property type="entry name" value="Rhodanese-like domain"/>
    <property type="match status" value="1"/>
</dbReference>
<dbReference type="HAMAP" id="MF_00469">
    <property type="entry name" value="TrhO"/>
    <property type="match status" value="1"/>
</dbReference>
<dbReference type="InterPro" id="IPR001763">
    <property type="entry name" value="Rhodanese-like_dom"/>
</dbReference>
<dbReference type="InterPro" id="IPR036873">
    <property type="entry name" value="Rhodanese-like_dom_sf"/>
</dbReference>
<dbReference type="InterPro" id="IPR020936">
    <property type="entry name" value="TrhO"/>
</dbReference>
<dbReference type="InterPro" id="IPR040503">
    <property type="entry name" value="TRHO_N"/>
</dbReference>
<dbReference type="NCBIfam" id="NF001136">
    <property type="entry name" value="PRK00142.1-4"/>
    <property type="match status" value="1"/>
</dbReference>
<dbReference type="PANTHER" id="PTHR43268:SF3">
    <property type="entry name" value="RHODANESE-LIKE DOMAIN-CONTAINING PROTEIN 7-RELATED"/>
    <property type="match status" value="1"/>
</dbReference>
<dbReference type="PANTHER" id="PTHR43268">
    <property type="entry name" value="THIOSULFATE SULFURTRANSFERASE/RHODANESE-LIKE DOMAIN-CONTAINING PROTEIN 2"/>
    <property type="match status" value="1"/>
</dbReference>
<dbReference type="Pfam" id="PF00581">
    <property type="entry name" value="Rhodanese"/>
    <property type="match status" value="1"/>
</dbReference>
<dbReference type="Pfam" id="PF17773">
    <property type="entry name" value="UPF0176_N"/>
    <property type="match status" value="1"/>
</dbReference>
<dbReference type="SMART" id="SM00450">
    <property type="entry name" value="RHOD"/>
    <property type="match status" value="1"/>
</dbReference>
<dbReference type="SUPFAM" id="SSF52821">
    <property type="entry name" value="Rhodanese/Cell cycle control phosphatase"/>
    <property type="match status" value="1"/>
</dbReference>
<dbReference type="PROSITE" id="PS50206">
    <property type="entry name" value="RHODANESE_3"/>
    <property type="match status" value="1"/>
</dbReference>
<gene>
    <name evidence="1" type="primary">trhO</name>
    <name type="ordered locus">PFLU_4311</name>
</gene>
<reference key="1">
    <citation type="journal article" date="2009" name="Genome Biol.">
        <title>Genomic and genetic analyses of diversity and plant interactions of Pseudomonas fluorescens.</title>
        <authorList>
            <person name="Silby M.W."/>
            <person name="Cerdeno-Tarraga A.M."/>
            <person name="Vernikos G.S."/>
            <person name="Giddens S.R."/>
            <person name="Jackson R.W."/>
            <person name="Preston G.M."/>
            <person name="Zhang X.-X."/>
            <person name="Moon C.D."/>
            <person name="Gehrig S.M."/>
            <person name="Godfrey S.A.C."/>
            <person name="Knight C.G."/>
            <person name="Malone J.G."/>
            <person name="Robinson Z."/>
            <person name="Spiers A.J."/>
            <person name="Harris S."/>
            <person name="Challis G.L."/>
            <person name="Yaxley A.M."/>
            <person name="Harris D."/>
            <person name="Seeger K."/>
            <person name="Murphy L."/>
            <person name="Rutter S."/>
            <person name="Squares R."/>
            <person name="Quail M.A."/>
            <person name="Saunders E."/>
            <person name="Mavromatis K."/>
            <person name="Brettin T.S."/>
            <person name="Bentley S.D."/>
            <person name="Hothersall J."/>
            <person name="Stephens E."/>
            <person name="Thomas C.M."/>
            <person name="Parkhill J."/>
            <person name="Levy S.B."/>
            <person name="Rainey P.B."/>
            <person name="Thomson N.R."/>
        </authorList>
    </citation>
    <scope>NUCLEOTIDE SEQUENCE [LARGE SCALE GENOMIC DNA]</scope>
    <source>
        <strain>SBW25</strain>
    </source>
</reference>
<comment type="function">
    <text evidence="1">Catalyzes oxygen-dependent 5-hydroxyuridine (ho5U) modification at position 34 in tRNAs.</text>
</comment>
<comment type="catalytic activity">
    <reaction evidence="1">
        <text>uridine(34) in tRNA + AH2 + O2 = 5-hydroxyuridine(34) in tRNA + A + H2O</text>
        <dbReference type="Rhea" id="RHEA:64224"/>
        <dbReference type="Rhea" id="RHEA-COMP:11727"/>
        <dbReference type="Rhea" id="RHEA-COMP:13381"/>
        <dbReference type="ChEBI" id="CHEBI:13193"/>
        <dbReference type="ChEBI" id="CHEBI:15377"/>
        <dbReference type="ChEBI" id="CHEBI:15379"/>
        <dbReference type="ChEBI" id="CHEBI:17499"/>
        <dbReference type="ChEBI" id="CHEBI:65315"/>
        <dbReference type="ChEBI" id="CHEBI:136877"/>
    </reaction>
</comment>
<comment type="similarity">
    <text evidence="1">Belongs to the TrhO family.</text>
</comment>
<evidence type="ECO:0000255" key="1">
    <source>
        <dbReference type="HAMAP-Rule" id="MF_00469"/>
    </source>
</evidence>
<proteinExistence type="inferred from homology"/>